<gene>
    <name type="primary">trkI</name>
    <name type="ordered locus">HELO_1450</name>
</gene>
<sequence>MADTRRVTDTLRRWAPILKVLAVLWLVLAIFMAIPLLVLIVESEPDALAFGLSIAIVLAAATLSWIVTWRIPVSLKPWQMFVLTTLSWVTISSFASLPLVLGAPQLSLTNAVFESVSAITTTGSTILVHIEDLSDGLKLWRGIMQWLGGIGIIVMGIAILPFLKVGGMRLFHTESSDWSDKVMPRTGGIAKATLSIYCGFTLLAAMAYYLGGMSPLDAVVHAMTSLATGGFANSDASFGAYAEQPQLLWMGSLFMLCGALPFVLYIRFLRGSRMALLRDQQVQGLLLLLLLVILALTIWRVSQGTPAFTSLTQVTFNVVSVVTTTGYASDDYSAWGATAYVAFFYLTFVGGCSGSTSGGMKIFRFQVAMLLLRDQLRYLIHASGVFVSRYNNQPLTDDITRGVVAFSFFFFLTVAGLALGLSLLGLDFTTALSGAATAVANVGPGLGETIGPAGNFAPLPDAAKWLLCVGMLMGRLEILTVLVLLTPMFWRQ</sequence>
<name>TRKI_HALED</name>
<protein>
    <recommendedName>
        <fullName>Trk system potassium uptake protein TrkI</fullName>
    </recommendedName>
</protein>
<dbReference type="EMBL" id="AY437839">
    <property type="protein sequence ID" value="AAR91793.1"/>
    <property type="molecule type" value="Genomic_DNA"/>
</dbReference>
<dbReference type="EMBL" id="FN869568">
    <property type="protein sequence ID" value="CBV41333.1"/>
    <property type="molecule type" value="Genomic_DNA"/>
</dbReference>
<dbReference type="RefSeq" id="WP_013331205.1">
    <property type="nucleotide sequence ID" value="NC_014532.2"/>
</dbReference>
<dbReference type="SMR" id="E1V6K4"/>
<dbReference type="STRING" id="768066.HELO_1450"/>
<dbReference type="TCDB" id="2.A.38.1.2">
    <property type="family name" value="the k(+) transporter (trk) family"/>
</dbReference>
<dbReference type="GeneID" id="91008661"/>
<dbReference type="KEGG" id="hel:HELO_1450"/>
<dbReference type="eggNOG" id="COG0168">
    <property type="taxonomic scope" value="Bacteria"/>
</dbReference>
<dbReference type="HOGENOM" id="CLU_030708_0_1_6"/>
<dbReference type="OrthoDB" id="9810952at2"/>
<dbReference type="Proteomes" id="UP000008707">
    <property type="component" value="Chromosome"/>
</dbReference>
<dbReference type="GO" id="GO:0005886">
    <property type="term" value="C:plasma membrane"/>
    <property type="evidence" value="ECO:0007669"/>
    <property type="project" value="UniProtKB-SubCell"/>
</dbReference>
<dbReference type="GO" id="GO:0015379">
    <property type="term" value="F:potassium:chloride symporter activity"/>
    <property type="evidence" value="ECO:0007669"/>
    <property type="project" value="InterPro"/>
</dbReference>
<dbReference type="InterPro" id="IPR003445">
    <property type="entry name" value="Cat_transpt"/>
</dbReference>
<dbReference type="InterPro" id="IPR004772">
    <property type="entry name" value="TrkH"/>
</dbReference>
<dbReference type="PANTHER" id="PTHR32024:SF3">
    <property type="entry name" value="TRK SYSTEM POTASSIUM UPTAKE PROTEIN"/>
    <property type="match status" value="1"/>
</dbReference>
<dbReference type="PANTHER" id="PTHR32024">
    <property type="entry name" value="TRK SYSTEM POTASSIUM UPTAKE PROTEIN TRKG-RELATED"/>
    <property type="match status" value="1"/>
</dbReference>
<dbReference type="Pfam" id="PF02386">
    <property type="entry name" value="TrkH"/>
    <property type="match status" value="1"/>
</dbReference>
<dbReference type="PIRSF" id="PIRSF006247">
    <property type="entry name" value="TrkH"/>
    <property type="match status" value="1"/>
</dbReference>
<reference key="1">
    <citation type="journal article" date="2005" name="J. Bacteriol.">
        <title>Potassium transport in a halophilic member of the bacteria domain: identification and characterization of the K+ uptake systems TrkH and TrkI from Halomonas elongata DSM 2581T.</title>
        <authorList>
            <person name="Kraegeloh A."/>
            <person name="Amendt B."/>
            <person name="Kunte H.J."/>
        </authorList>
    </citation>
    <scope>NUCLEOTIDE SEQUENCE [GENOMIC DNA]</scope>
    <scope>FUNCTION</scope>
    <scope>BIOPHYSICOCHEMICAL PROPERTIES</scope>
    <scope>GENE NAME</scope>
    <source>
        <strain>ATCC 33173 / DSM 2581 / NBRC 15536 / NCIMB 2198 / 1H9</strain>
    </source>
</reference>
<reference key="2">
    <citation type="journal article" date="2011" name="Environ. Microbiol.">
        <title>A blueprint of ectoine metabolism from the genome of the industrial producer Halomonas elongata DSM 2581(T).</title>
        <authorList>
            <person name="Schwibbert K."/>
            <person name="Marin-Sanguino A."/>
            <person name="Bagyan I."/>
            <person name="Heidrich G."/>
            <person name="Lentzen G."/>
            <person name="Seitz H."/>
            <person name="Rampp M."/>
            <person name="Schuster S.C."/>
            <person name="Klenk H.P."/>
            <person name="Pfeiffer F."/>
            <person name="Oesterhelt D."/>
            <person name="Kunte H.J."/>
        </authorList>
    </citation>
    <scope>NUCLEOTIDE SEQUENCE [LARGE SCALE GENOMIC DNA]</scope>
    <source>
        <strain>ATCC 33173 / DSM 2581 / NBRC 15536 / NCIMB 2198 / 1H9</strain>
    </source>
</reference>
<organism>
    <name type="scientific">Halomonas elongata (strain ATCC 33173 / DSM 2581 / NBRC 15536 / NCIMB 2198 / 1H9)</name>
    <dbReference type="NCBI Taxonomy" id="768066"/>
    <lineage>
        <taxon>Bacteria</taxon>
        <taxon>Pseudomonadati</taxon>
        <taxon>Pseudomonadota</taxon>
        <taxon>Gammaproteobacteria</taxon>
        <taxon>Oceanospirillales</taxon>
        <taxon>Halomonadaceae</taxon>
        <taxon>Halomonas</taxon>
    </lineage>
</organism>
<keyword id="KW-0997">Cell inner membrane</keyword>
<keyword id="KW-1003">Cell membrane</keyword>
<keyword id="KW-0406">Ion transport</keyword>
<keyword id="KW-0472">Membrane</keyword>
<keyword id="KW-0630">Potassium</keyword>
<keyword id="KW-0633">Potassium transport</keyword>
<keyword id="KW-0812">Transmembrane</keyword>
<keyword id="KW-1133">Transmembrane helix</keyword>
<keyword id="KW-0813">Transport</keyword>
<evidence type="ECO:0000250" key="1"/>
<evidence type="ECO:0000255" key="2"/>
<evidence type="ECO:0000269" key="3">
    <source>
    </source>
</evidence>
<evidence type="ECO:0000305" key="4"/>
<proteinExistence type="evidence at protein level"/>
<feature type="chain" id="PRO_0000430039" description="Trk system potassium uptake protein TrkI">
    <location>
        <begin position="1"/>
        <end position="492"/>
    </location>
</feature>
<feature type="transmembrane region" description="Helical" evidence="2">
    <location>
        <begin position="20"/>
        <end position="40"/>
    </location>
</feature>
<feature type="transmembrane region" description="Helical" evidence="2">
    <location>
        <begin position="47"/>
        <end position="67"/>
    </location>
</feature>
<feature type="transmembrane region" description="Helical" evidence="2">
    <location>
        <begin position="81"/>
        <end position="101"/>
    </location>
</feature>
<feature type="transmembrane region" description="Helical" evidence="2">
    <location>
        <begin position="143"/>
        <end position="163"/>
    </location>
</feature>
<feature type="transmembrane region" description="Helical" evidence="2">
    <location>
        <begin position="196"/>
        <end position="216"/>
    </location>
</feature>
<feature type="transmembrane region" description="Helical" evidence="2">
    <location>
        <begin position="246"/>
        <end position="266"/>
    </location>
</feature>
<feature type="transmembrane region" description="Helical" evidence="2">
    <location>
        <begin position="282"/>
        <end position="302"/>
    </location>
</feature>
<feature type="transmembrane region" description="Helical" evidence="2">
    <location>
        <begin position="334"/>
        <end position="354"/>
    </location>
</feature>
<feature type="transmembrane region" description="Helical" evidence="2">
    <location>
        <begin position="403"/>
        <end position="423"/>
    </location>
</feature>
<feature type="transmembrane region" description="Helical" evidence="2">
    <location>
        <begin position="465"/>
        <end position="485"/>
    </location>
</feature>
<comment type="function">
    <text evidence="3">Medium-affinity potassium transport system. Probably interacts with Trk system potassium uptake protein TrkA. Main K(+) transporter in osmotically adapted cells.</text>
</comment>
<comment type="biophysicochemical properties">
    <kinetics>
        <KM evidence="3">1.12 mM for K(+)</KM>
        <Vmax evidence="3">176.0 nmol/min/mg enzyme</Vmax>
    </kinetics>
</comment>
<comment type="subcellular location">
    <subcellularLocation>
        <location evidence="1">Cell inner membrane</location>
        <topology evidence="1">Multi-pass membrane protein</topology>
    </subcellularLocation>
</comment>
<comment type="similarity">
    <text evidence="4">Belongs to the TrkH potassium transport family.</text>
</comment>
<accession>E1V6K4</accession>
<accession>Q6T3V6</accession>